<organism>
    <name type="scientific">Escherichia coli O45:K1 (strain S88 / ExPEC)</name>
    <dbReference type="NCBI Taxonomy" id="585035"/>
    <lineage>
        <taxon>Bacteria</taxon>
        <taxon>Pseudomonadati</taxon>
        <taxon>Pseudomonadota</taxon>
        <taxon>Gammaproteobacteria</taxon>
        <taxon>Enterobacterales</taxon>
        <taxon>Enterobacteriaceae</taxon>
        <taxon>Escherichia</taxon>
    </lineage>
</organism>
<evidence type="ECO:0000255" key="1">
    <source>
        <dbReference type="HAMAP-Rule" id="MF_00578"/>
    </source>
</evidence>
<proteinExistence type="inferred from homology"/>
<protein>
    <recommendedName>
        <fullName evidence="1">Glutamate--cysteine ligase</fullName>
        <ecNumber evidence="1">6.3.2.2</ecNumber>
    </recommendedName>
    <alternativeName>
        <fullName evidence="1">Gamma-ECS</fullName>
        <shortName evidence="1">GCS</shortName>
    </alternativeName>
    <alternativeName>
        <fullName evidence="1">Gamma-glutamylcysteine synthetase</fullName>
    </alternativeName>
</protein>
<accession>B7MKG2</accession>
<keyword id="KW-0067">ATP-binding</keyword>
<keyword id="KW-0317">Glutathione biosynthesis</keyword>
<keyword id="KW-0436">Ligase</keyword>
<keyword id="KW-0547">Nucleotide-binding</keyword>
<keyword id="KW-1185">Reference proteome</keyword>
<sequence>MIPDVSQALAWLEKHPQALKGIQRGLERETLRVNADGTLATTGHPEALGSALTHKWITTDFAEALLEFITPVDGDIEHMLTFMRDLHRYTARNMGDERMWPLSMPCYIAEGQDIELAQYGTSNTGRFKTLYREGLKNRYGALMQTISGVHYNFSLPMAFWQAKCGDISGADAKEKISAGYFRVIRNYYRFGWVIPYLFGASPAICSSFLQGKPTSLPFEKTECGMYYLPYATSLRLSDLGYTNKSQSNLGITFNDLYEYVAGLKQAIKTPSEEYAKIGIEKDGKRLQINSNVLQIENELYAPIRPKRVTRSGESPSDALLRGGIEYIEVRSLDINPFSPIGVDEQQVRFLDLFMVWCALADAPEMSSSELACTRVNWNRVILEGRKPGLTLGIGCETAQFPLPQVGKDLFRDLKRVAQTLDSINGGEAYQKVCDELVACFDNPDLTFSARILRSMIDTGIGGTGKAFAEAYRNLLREEPLEILREEDFVAEREASERRQQEMEAADTEPFAVWLEKHA</sequence>
<name>GSH1_ECO45</name>
<reference key="1">
    <citation type="journal article" date="2009" name="PLoS Genet.">
        <title>Organised genome dynamics in the Escherichia coli species results in highly diverse adaptive paths.</title>
        <authorList>
            <person name="Touchon M."/>
            <person name="Hoede C."/>
            <person name="Tenaillon O."/>
            <person name="Barbe V."/>
            <person name="Baeriswyl S."/>
            <person name="Bidet P."/>
            <person name="Bingen E."/>
            <person name="Bonacorsi S."/>
            <person name="Bouchier C."/>
            <person name="Bouvet O."/>
            <person name="Calteau A."/>
            <person name="Chiapello H."/>
            <person name="Clermont O."/>
            <person name="Cruveiller S."/>
            <person name="Danchin A."/>
            <person name="Diard M."/>
            <person name="Dossat C."/>
            <person name="Karoui M.E."/>
            <person name="Frapy E."/>
            <person name="Garry L."/>
            <person name="Ghigo J.M."/>
            <person name="Gilles A.M."/>
            <person name="Johnson J."/>
            <person name="Le Bouguenec C."/>
            <person name="Lescat M."/>
            <person name="Mangenot S."/>
            <person name="Martinez-Jehanne V."/>
            <person name="Matic I."/>
            <person name="Nassif X."/>
            <person name="Oztas S."/>
            <person name="Petit M.A."/>
            <person name="Pichon C."/>
            <person name="Rouy Z."/>
            <person name="Ruf C.S."/>
            <person name="Schneider D."/>
            <person name="Tourret J."/>
            <person name="Vacherie B."/>
            <person name="Vallenet D."/>
            <person name="Medigue C."/>
            <person name="Rocha E.P.C."/>
            <person name="Denamur E."/>
        </authorList>
    </citation>
    <scope>NUCLEOTIDE SEQUENCE [LARGE SCALE GENOMIC DNA]</scope>
    <source>
        <strain>S88 / ExPEC</strain>
    </source>
</reference>
<gene>
    <name evidence="1" type="primary">gshA</name>
    <name type="ordered locus">ECS88_2955</name>
</gene>
<comment type="catalytic activity">
    <reaction evidence="1">
        <text>L-cysteine + L-glutamate + ATP = gamma-L-glutamyl-L-cysteine + ADP + phosphate + H(+)</text>
        <dbReference type="Rhea" id="RHEA:13285"/>
        <dbReference type="ChEBI" id="CHEBI:15378"/>
        <dbReference type="ChEBI" id="CHEBI:29985"/>
        <dbReference type="ChEBI" id="CHEBI:30616"/>
        <dbReference type="ChEBI" id="CHEBI:35235"/>
        <dbReference type="ChEBI" id="CHEBI:43474"/>
        <dbReference type="ChEBI" id="CHEBI:58173"/>
        <dbReference type="ChEBI" id="CHEBI:456216"/>
        <dbReference type="EC" id="6.3.2.2"/>
    </reaction>
</comment>
<comment type="pathway">
    <text evidence="1">Sulfur metabolism; glutathione biosynthesis; glutathione from L-cysteine and L-glutamate: step 1/2.</text>
</comment>
<comment type="similarity">
    <text evidence="1">Belongs to the glutamate--cysteine ligase type 1 family. Type 1 subfamily.</text>
</comment>
<feature type="chain" id="PRO_1000129587" description="Glutamate--cysteine ligase">
    <location>
        <begin position="1"/>
        <end position="518"/>
    </location>
</feature>
<dbReference type="EC" id="6.3.2.2" evidence="1"/>
<dbReference type="EMBL" id="CU928161">
    <property type="protein sequence ID" value="CAR04202.1"/>
    <property type="molecule type" value="Genomic_DNA"/>
</dbReference>
<dbReference type="RefSeq" id="WP_000611804.1">
    <property type="nucleotide sequence ID" value="NC_011742.1"/>
</dbReference>
<dbReference type="SMR" id="B7MKG2"/>
<dbReference type="KEGG" id="ecz:ECS88_2955"/>
<dbReference type="HOGENOM" id="CLU_020728_3_0_6"/>
<dbReference type="UniPathway" id="UPA00142">
    <property type="reaction ID" value="UER00209"/>
</dbReference>
<dbReference type="Proteomes" id="UP000000747">
    <property type="component" value="Chromosome"/>
</dbReference>
<dbReference type="GO" id="GO:0005829">
    <property type="term" value="C:cytosol"/>
    <property type="evidence" value="ECO:0007669"/>
    <property type="project" value="TreeGrafter"/>
</dbReference>
<dbReference type="GO" id="GO:0005524">
    <property type="term" value="F:ATP binding"/>
    <property type="evidence" value="ECO:0007669"/>
    <property type="project" value="UniProtKB-KW"/>
</dbReference>
<dbReference type="GO" id="GO:0004357">
    <property type="term" value="F:glutamate-cysteine ligase activity"/>
    <property type="evidence" value="ECO:0007669"/>
    <property type="project" value="UniProtKB-UniRule"/>
</dbReference>
<dbReference type="GO" id="GO:0046872">
    <property type="term" value="F:metal ion binding"/>
    <property type="evidence" value="ECO:0007669"/>
    <property type="project" value="TreeGrafter"/>
</dbReference>
<dbReference type="GO" id="GO:0006750">
    <property type="term" value="P:glutathione biosynthetic process"/>
    <property type="evidence" value="ECO:0007669"/>
    <property type="project" value="UniProtKB-UniRule"/>
</dbReference>
<dbReference type="FunFam" id="3.30.590.20:FF:000001">
    <property type="entry name" value="Glutamate--cysteine ligase"/>
    <property type="match status" value="1"/>
</dbReference>
<dbReference type="Gene3D" id="3.30.590.20">
    <property type="match status" value="1"/>
</dbReference>
<dbReference type="HAMAP" id="MF_00578">
    <property type="entry name" value="Glu_cys_ligase"/>
    <property type="match status" value="1"/>
</dbReference>
<dbReference type="InterPro" id="IPR014746">
    <property type="entry name" value="Gln_synth/guanido_kin_cat_dom"/>
</dbReference>
<dbReference type="InterPro" id="IPR007370">
    <property type="entry name" value="Glu_cys_ligase"/>
</dbReference>
<dbReference type="InterPro" id="IPR006334">
    <property type="entry name" value="Glut_cys_ligase"/>
</dbReference>
<dbReference type="NCBIfam" id="TIGR01434">
    <property type="entry name" value="glu_cys_ligase"/>
    <property type="match status" value="1"/>
</dbReference>
<dbReference type="PANTHER" id="PTHR38761">
    <property type="entry name" value="GLUTAMATE--CYSTEINE LIGASE"/>
    <property type="match status" value="1"/>
</dbReference>
<dbReference type="PANTHER" id="PTHR38761:SF1">
    <property type="entry name" value="GLUTAMATE--CYSTEINE LIGASE"/>
    <property type="match status" value="1"/>
</dbReference>
<dbReference type="Pfam" id="PF04262">
    <property type="entry name" value="Glu_cys_ligase"/>
    <property type="match status" value="1"/>
</dbReference>
<dbReference type="SUPFAM" id="SSF55931">
    <property type="entry name" value="Glutamine synthetase/guanido kinase"/>
    <property type="match status" value="1"/>
</dbReference>